<comment type="function">
    <text evidence="1">Catalyzes the transfer of an acetyl group from acetyl-CoA to tetrahydrodipicolinate.</text>
</comment>
<comment type="catalytic activity">
    <reaction evidence="1">
        <text>(S)-2,3,4,5-tetrahydrodipicolinate + acetyl-CoA + H2O = L-2-acetamido-6-oxoheptanedioate + CoA</text>
        <dbReference type="Rhea" id="RHEA:13085"/>
        <dbReference type="ChEBI" id="CHEBI:15377"/>
        <dbReference type="ChEBI" id="CHEBI:16845"/>
        <dbReference type="ChEBI" id="CHEBI:57287"/>
        <dbReference type="ChEBI" id="CHEBI:57288"/>
        <dbReference type="ChEBI" id="CHEBI:58117"/>
        <dbReference type="EC" id="2.3.1.89"/>
    </reaction>
</comment>
<comment type="pathway">
    <text evidence="1">Amino-acid biosynthesis; L-lysine biosynthesis via DAP pathway; LL-2,6-diaminopimelate from (S)-tetrahydrodipicolinate (acetylase route): step 1/3.</text>
</comment>
<comment type="similarity">
    <text evidence="1">Belongs to the transferase hexapeptide repeat family. DapH subfamily.</text>
</comment>
<accession>Q9K9H8</accession>
<feature type="chain" id="PRO_0000376636" description="2,3,4,5-tetrahydropyridine-2,6-dicarboxylate N-acetyltransferase">
    <location>
        <begin position="1"/>
        <end position="240"/>
    </location>
</feature>
<organism>
    <name type="scientific">Halalkalibacterium halodurans (strain ATCC BAA-125 / DSM 18197 / FERM 7344 / JCM 9153 / C-125)</name>
    <name type="common">Bacillus halodurans</name>
    <dbReference type="NCBI Taxonomy" id="272558"/>
    <lineage>
        <taxon>Bacteria</taxon>
        <taxon>Bacillati</taxon>
        <taxon>Bacillota</taxon>
        <taxon>Bacilli</taxon>
        <taxon>Bacillales</taxon>
        <taxon>Bacillaceae</taxon>
        <taxon>Halalkalibacterium (ex Joshi et al. 2022)</taxon>
    </lineage>
</organism>
<protein>
    <recommendedName>
        <fullName evidence="1">2,3,4,5-tetrahydropyridine-2,6-dicarboxylate N-acetyltransferase</fullName>
        <ecNumber evidence="1">2.3.1.89</ecNumber>
    </recommendedName>
    <alternativeName>
        <fullName evidence="1">Tetrahydrodipicolinate N-acetyltransferase</fullName>
        <shortName evidence="1">THP acetyltransferase</shortName>
        <shortName evidence="1">Tetrahydropicolinate acetylase</shortName>
    </alternativeName>
</protein>
<evidence type="ECO:0000255" key="1">
    <source>
        <dbReference type="HAMAP-Rule" id="MF_01691"/>
    </source>
</evidence>
<dbReference type="EC" id="2.3.1.89" evidence="1"/>
<dbReference type="EMBL" id="BA000004">
    <property type="protein sequence ID" value="BAB06388.1"/>
    <property type="molecule type" value="Genomic_DNA"/>
</dbReference>
<dbReference type="PIR" id="E83983">
    <property type="entry name" value="E83983"/>
</dbReference>
<dbReference type="RefSeq" id="WP_010898818.1">
    <property type="nucleotide sequence ID" value="NC_002570.2"/>
</dbReference>
<dbReference type="SMR" id="Q9K9H8"/>
<dbReference type="STRING" id="272558.gene:10728567"/>
<dbReference type="KEGG" id="bha:BH2669"/>
<dbReference type="eggNOG" id="COG2171">
    <property type="taxonomic scope" value="Bacteria"/>
</dbReference>
<dbReference type="HOGENOM" id="CLU_103751_0_0_9"/>
<dbReference type="OrthoDB" id="9788080at2"/>
<dbReference type="UniPathway" id="UPA00034">
    <property type="reaction ID" value="UER00022"/>
</dbReference>
<dbReference type="Proteomes" id="UP000001258">
    <property type="component" value="Chromosome"/>
</dbReference>
<dbReference type="GO" id="GO:0047200">
    <property type="term" value="F:tetrahydrodipicolinate N-acetyltransferase activity"/>
    <property type="evidence" value="ECO:0007669"/>
    <property type="project" value="UniProtKB-EC"/>
</dbReference>
<dbReference type="GO" id="GO:0019877">
    <property type="term" value="P:diaminopimelate biosynthetic process"/>
    <property type="evidence" value="ECO:0007669"/>
    <property type="project" value="UniProtKB-UniRule"/>
</dbReference>
<dbReference type="GO" id="GO:0009089">
    <property type="term" value="P:lysine biosynthetic process via diaminopimelate"/>
    <property type="evidence" value="ECO:0007669"/>
    <property type="project" value="UniProtKB-UniRule"/>
</dbReference>
<dbReference type="CDD" id="cd03350">
    <property type="entry name" value="LbH_THP_succinylT"/>
    <property type="match status" value="1"/>
</dbReference>
<dbReference type="Gene3D" id="2.160.10.10">
    <property type="entry name" value="Hexapeptide repeat proteins"/>
    <property type="match status" value="1"/>
</dbReference>
<dbReference type="Gene3D" id="3.30.70.250">
    <property type="entry name" value="Malonyl-CoA ACP transacylase, ACP-binding"/>
    <property type="match status" value="1"/>
</dbReference>
<dbReference type="HAMAP" id="MF_01691">
    <property type="entry name" value="DapH"/>
    <property type="match status" value="1"/>
</dbReference>
<dbReference type="InterPro" id="IPR019873">
    <property type="entry name" value="DapH"/>
</dbReference>
<dbReference type="InterPro" id="IPR013710">
    <property type="entry name" value="DapH_N"/>
</dbReference>
<dbReference type="InterPro" id="IPR001451">
    <property type="entry name" value="Hexapep"/>
</dbReference>
<dbReference type="InterPro" id="IPR050179">
    <property type="entry name" value="Trans_hexapeptide_repeat"/>
</dbReference>
<dbReference type="InterPro" id="IPR011004">
    <property type="entry name" value="Trimer_LpxA-like_sf"/>
</dbReference>
<dbReference type="NCBIfam" id="TIGR03532">
    <property type="entry name" value="DapD_Ac"/>
    <property type="match status" value="1"/>
</dbReference>
<dbReference type="PANTHER" id="PTHR43300:SF10">
    <property type="entry name" value="2,3,4,5-TETRAHYDROPYRIDINE-2,6-DICARBOXYLATE N-ACETYLTRANSFERASE"/>
    <property type="match status" value="1"/>
</dbReference>
<dbReference type="PANTHER" id="PTHR43300">
    <property type="entry name" value="ACETYLTRANSFERASE"/>
    <property type="match status" value="1"/>
</dbReference>
<dbReference type="Pfam" id="PF08503">
    <property type="entry name" value="DapH_N"/>
    <property type="match status" value="1"/>
</dbReference>
<dbReference type="Pfam" id="PF00132">
    <property type="entry name" value="Hexapep"/>
    <property type="match status" value="1"/>
</dbReference>
<dbReference type="Pfam" id="PF14602">
    <property type="entry name" value="Hexapep_2"/>
    <property type="match status" value="1"/>
</dbReference>
<dbReference type="SUPFAM" id="SSF51161">
    <property type="entry name" value="Trimeric LpxA-like enzymes"/>
    <property type="match status" value="1"/>
</dbReference>
<reference key="1">
    <citation type="journal article" date="2000" name="Nucleic Acids Res.">
        <title>Complete genome sequence of the alkaliphilic bacterium Bacillus halodurans and genomic sequence comparison with Bacillus subtilis.</title>
        <authorList>
            <person name="Takami H."/>
            <person name="Nakasone K."/>
            <person name="Takaki Y."/>
            <person name="Maeno G."/>
            <person name="Sasaki R."/>
            <person name="Masui N."/>
            <person name="Fuji F."/>
            <person name="Hirama C."/>
            <person name="Nakamura Y."/>
            <person name="Ogasawara N."/>
            <person name="Kuhara S."/>
            <person name="Horikoshi K."/>
        </authorList>
    </citation>
    <scope>NUCLEOTIDE SEQUENCE [LARGE SCALE GENOMIC DNA]</scope>
    <source>
        <strain>ATCC BAA-125 / DSM 18197 / FERM 7344 / JCM 9153 / C-125</strain>
    </source>
</reference>
<name>DAPH_HALH5</name>
<gene>
    <name evidence="1" type="primary">dapH</name>
    <name type="ordered locus">BH2669</name>
</gene>
<keyword id="KW-0012">Acyltransferase</keyword>
<keyword id="KW-0028">Amino-acid biosynthesis</keyword>
<keyword id="KW-0220">Diaminopimelate biosynthesis</keyword>
<keyword id="KW-0457">Lysine biosynthesis</keyword>
<keyword id="KW-1185">Reference proteome</keyword>
<keyword id="KW-0677">Repeat</keyword>
<keyword id="KW-0808">Transferase</keyword>
<proteinExistence type="inferred from homology"/>
<sequence length="240" mass="25313">MKMMDANEIIQFISNSQKTTPVKVYIKGDLEGIDFGANTKSFINGQTGVLFGEWSEIDAALKANEAKIKDVVVENDRRNSAIPLLDLKNIKARIEPGAIIRDQVEIGDNAVIMMGASINIGSVIGEGTMIDMNVVLGGRATVGKNCHIGAGSVLAGVIEPPSAKPVVVEDDVVIGANCVILEGVTVGKGAVVAAGAVVTEDVPPNTVVAGTPARVIKEIDEKTKGKTEIKQELRRLNEDN</sequence>